<organism>
    <name type="scientific">Oryctolagus cuniculus</name>
    <name type="common">Rabbit</name>
    <dbReference type="NCBI Taxonomy" id="9986"/>
    <lineage>
        <taxon>Eukaryota</taxon>
        <taxon>Metazoa</taxon>
        <taxon>Chordata</taxon>
        <taxon>Craniata</taxon>
        <taxon>Vertebrata</taxon>
        <taxon>Euteleostomi</taxon>
        <taxon>Mammalia</taxon>
        <taxon>Eutheria</taxon>
        <taxon>Euarchontoglires</taxon>
        <taxon>Glires</taxon>
        <taxon>Lagomorpha</taxon>
        <taxon>Leporidae</taxon>
        <taxon>Oryctolagus</taxon>
    </lineage>
</organism>
<comment type="function">
    <text evidence="5">Inhibitor of protein-phosphatase 1. This protein may be important in hormonal control of glycogen metabolism. Hormones that elevate intracellular cAMP increase I-1 activity in many tissues. I-1 activation may impose cAMP control over proteins that are not directly phosphorylated by PKA. Following a rise in intracellular calcium, I-1 is inactivated by calcineurin (or PP2B). Does not inhibit type-2 phosphatases.</text>
</comment>
<comment type="subunit">
    <text evidence="1">Interacts with PPP1R15A.</text>
</comment>
<comment type="PTM">
    <text evidence="1">Phosphorylation of Thr-35 is required for activity.</text>
</comment>
<comment type="similarity">
    <text evidence="6">Belongs to the protein phosphatase inhibitor 1 family.</text>
</comment>
<sequence length="166" mass="18032">MEQDNSPRKIQFTVPLLEPHLDPEAAEQIRRRRPTPATLVLTSDQSSPEVDEDRIPNPLLKPSLAMSPRQRKKMTRTTPTMKELQMMVEHHLGQQEQGEEPEGAAEGTGAQESQPPGTPGTGAESRLGPSATAQKPAQPSPRAQERRGEEPSTAKTSQDSQGASAV</sequence>
<evidence type="ECO:0000250" key="1"/>
<evidence type="ECO:0000250" key="2">
    <source>
        <dbReference type="UniProtKB" id="Q9ERT9"/>
    </source>
</evidence>
<evidence type="ECO:0000256" key="3">
    <source>
        <dbReference type="SAM" id="MobiDB-lite"/>
    </source>
</evidence>
<evidence type="ECO:0000269" key="4">
    <source>
    </source>
</evidence>
<evidence type="ECO:0000269" key="5">
    <source>
    </source>
</evidence>
<evidence type="ECO:0000305" key="6"/>
<keyword id="KW-0007">Acetylation</keyword>
<keyword id="KW-0119">Carbohydrate metabolism</keyword>
<keyword id="KW-0903">Direct protein sequencing</keyword>
<keyword id="KW-0321">Glycogen metabolism</keyword>
<keyword id="KW-0597">Phosphoprotein</keyword>
<keyword id="KW-0650">Protein phosphatase inhibitor</keyword>
<keyword id="KW-1185">Reference proteome</keyword>
<reference key="1">
    <citation type="journal article" date="1982" name="Eur. J. Biochem.">
        <title>Complete primary structure of protein phosphatase inhibitor-1 from rabbit skeletal muscle.</title>
        <authorList>
            <person name="Aitken A."/>
            <person name="Bilham T."/>
            <person name="Cohen P."/>
        </authorList>
    </citation>
    <scope>PROTEIN SEQUENCE</scope>
    <scope>ACETYLATION AT MET-1</scope>
    <scope>PHOSPHORYLATION AT THR-35 AND SER-67</scope>
</reference>
<reference key="2">
    <citation type="submission" date="1988-10" db="UniProtKB">
        <authorList>
            <person name="Aitken A."/>
        </authorList>
    </citation>
    <scope>SEQUENCE REVISION TO 164</scope>
</reference>
<reference key="3">
    <citation type="journal article" date="1982" name="FEBS Lett.">
        <title>Isolation and characterisation of active fragments of protein phosphatase inhibitor-1 from rabbit skeletal muscle.</title>
        <authorList>
            <person name="Aitken A."/>
            <person name="Cohen P."/>
        </authorList>
    </citation>
    <scope>FUNCTION</scope>
</reference>
<feature type="chain" id="PRO_0000071479" description="Protein phosphatase 1 regulatory subunit 1A">
    <location>
        <begin position="1"/>
        <end position="166"/>
    </location>
</feature>
<feature type="region of interest" description="Disordered" evidence="3">
    <location>
        <begin position="1"/>
        <end position="166"/>
    </location>
</feature>
<feature type="region of interest" description="Essential for activity">
    <location>
        <begin position="9"/>
        <end position="12"/>
    </location>
</feature>
<feature type="region of interest" description="Essential for activity" evidence="6">
    <location>
        <begin position="42"/>
        <end position="54"/>
    </location>
</feature>
<feature type="region of interest" description="Interaction with PPP1R15A" evidence="1">
    <location>
        <begin position="143"/>
        <end position="166"/>
    </location>
</feature>
<feature type="compositionally biased region" description="Basic and acidic residues" evidence="3">
    <location>
        <begin position="19"/>
        <end position="29"/>
    </location>
</feature>
<feature type="compositionally biased region" description="Low complexity" evidence="3">
    <location>
        <begin position="104"/>
        <end position="114"/>
    </location>
</feature>
<feature type="compositionally biased region" description="Basic and acidic residues" evidence="3">
    <location>
        <begin position="143"/>
        <end position="152"/>
    </location>
</feature>
<feature type="compositionally biased region" description="Polar residues" evidence="3">
    <location>
        <begin position="153"/>
        <end position="166"/>
    </location>
</feature>
<feature type="modified residue" description="N-acetylmethionine" evidence="4">
    <location>
        <position position="1"/>
    </location>
</feature>
<feature type="modified residue" description="Phosphothreonine; by PKA" evidence="4">
    <location>
        <position position="35"/>
    </location>
</feature>
<feature type="modified residue" description="Phosphoserine" evidence="2">
    <location>
        <position position="43"/>
    </location>
</feature>
<feature type="modified residue" description="Phosphoserine" evidence="2">
    <location>
        <position position="46"/>
    </location>
</feature>
<feature type="modified residue" description="Phosphoserine" evidence="2">
    <location>
        <position position="47"/>
    </location>
</feature>
<feature type="modified residue" description="Phosphoserine" evidence="4">
    <location>
        <position position="67"/>
    </location>
</feature>
<feature type="sequence variant" description="In 40% of the molecules.">
    <location>
        <begin position="164"/>
        <end position="166"/>
    </location>
</feature>
<name>PPR1A_RABIT</name>
<protein>
    <recommendedName>
        <fullName>Protein phosphatase 1 regulatory subunit 1A</fullName>
    </recommendedName>
    <alternativeName>
        <fullName>Protein phosphatase inhibitor 1</fullName>
        <shortName>I-1</shortName>
        <shortName>IPP-1</shortName>
    </alternativeName>
</protein>
<proteinExistence type="evidence at protein level"/>
<dbReference type="PIR" id="A91120">
    <property type="entry name" value="PZRB1"/>
</dbReference>
<dbReference type="SMR" id="P01099"/>
<dbReference type="FunCoup" id="P01099">
    <property type="interactions" value="60"/>
</dbReference>
<dbReference type="IntAct" id="P01099">
    <property type="interactions" value="1"/>
</dbReference>
<dbReference type="MINT" id="P01099"/>
<dbReference type="STRING" id="9986.ENSOCUP00000039736"/>
<dbReference type="iPTMnet" id="P01099"/>
<dbReference type="PaxDb" id="9986-ENSOCUP00000011659"/>
<dbReference type="eggNOG" id="ENOG502S1WG">
    <property type="taxonomic scope" value="Eukaryota"/>
</dbReference>
<dbReference type="InParanoid" id="P01099"/>
<dbReference type="Proteomes" id="UP000001811">
    <property type="component" value="Unplaced"/>
</dbReference>
<dbReference type="GO" id="GO:0098723">
    <property type="term" value="C:skeletal muscle myofibril"/>
    <property type="evidence" value="ECO:0000314"/>
    <property type="project" value="CAFA"/>
</dbReference>
<dbReference type="GO" id="GO:0140678">
    <property type="term" value="F:molecular function inhibitor activity"/>
    <property type="evidence" value="ECO:0000269"/>
    <property type="project" value="DisProt"/>
</dbReference>
<dbReference type="GO" id="GO:0004864">
    <property type="term" value="F:protein phosphatase inhibitor activity"/>
    <property type="evidence" value="ECO:0000314"/>
    <property type="project" value="CAFA"/>
</dbReference>
<dbReference type="GO" id="GO:0005977">
    <property type="term" value="P:glycogen metabolic process"/>
    <property type="evidence" value="ECO:0007669"/>
    <property type="project" value="UniProtKB-KW"/>
</dbReference>
<dbReference type="GO" id="GO:0035556">
    <property type="term" value="P:intracellular signal transduction"/>
    <property type="evidence" value="ECO:0007669"/>
    <property type="project" value="TreeGrafter"/>
</dbReference>
<dbReference type="DisProt" id="DP00325"/>
<dbReference type="InterPro" id="IPR008466">
    <property type="entry name" value="PPP1R1A/B/C"/>
</dbReference>
<dbReference type="PANTHER" id="PTHR15417:SF4">
    <property type="entry name" value="PROTEIN PHOSPHATASE 1 REGULATORY SUBUNIT 1A"/>
    <property type="match status" value="1"/>
</dbReference>
<dbReference type="PANTHER" id="PTHR15417">
    <property type="entry name" value="PROTEIN PHOSPHATASE INHIBITOR AND DOPAMINE- AND CAMP-REGULATED NEURONAL PHOSPHOPROTEIN"/>
    <property type="match status" value="1"/>
</dbReference>
<dbReference type="Pfam" id="PF05395">
    <property type="entry name" value="DARPP-32"/>
    <property type="match status" value="1"/>
</dbReference>
<gene>
    <name type="primary">PPP1R1A</name>
    <name type="synonym">IPP1</name>
</gene>
<accession>P01099</accession>